<feature type="chain" id="PRO_0000415700" description="Outer envelope pore protein 16, chloroplastic">
    <location>
        <begin position="1"/>
        <end position="146"/>
    </location>
</feature>
<feature type="transmembrane region" description="Helical" evidence="2">
    <location>
        <begin position="75"/>
        <end position="91"/>
    </location>
</feature>
<feature type="transmembrane region" description="Helical" evidence="2">
    <location>
        <begin position="103"/>
        <end position="119"/>
    </location>
</feature>
<feature type="transmembrane region" description="Helical" evidence="2">
    <location>
        <begin position="128"/>
        <end position="146"/>
    </location>
</feature>
<feature type="region of interest" description="Contains 4 beta strands">
    <location>
        <begin position="1"/>
        <end position="73"/>
    </location>
</feature>
<feature type="mutagenesis site" description="Loss of CuCl(2) sensitivity of the channel." evidence="3">
    <original>C</original>
    <variation>S</variation>
    <location>
        <position position="71"/>
    </location>
</feature>
<dbReference type="EMBL" id="Z73553">
    <property type="protein sequence ID" value="CAA97910.1"/>
    <property type="molecule type" value="mRNA"/>
</dbReference>
<dbReference type="PIR" id="T06471">
    <property type="entry name" value="T06471"/>
</dbReference>
<dbReference type="BMRB" id="Q41050"/>
<dbReference type="SMR" id="Q41050"/>
<dbReference type="TCDB" id="1.B.30.1.1">
    <property type="family name" value="the plastid outer envelope porin of 16 kda (oep16) family"/>
</dbReference>
<dbReference type="EnsemblPlants" id="Psat5g284600.2">
    <property type="protein sequence ID" value="Psat5g284600.2.cds"/>
    <property type="gene ID" value="Psat5g284600"/>
</dbReference>
<dbReference type="Gramene" id="Psat5g284600.2">
    <property type="protein sequence ID" value="Psat5g284600.2.cds"/>
    <property type="gene ID" value="Psat5g284600"/>
</dbReference>
<dbReference type="OrthoDB" id="75343at2759"/>
<dbReference type="GO" id="GO:0009707">
    <property type="term" value="C:chloroplast outer membrane"/>
    <property type="evidence" value="ECO:0007669"/>
    <property type="project" value="UniProtKB-SubCell"/>
</dbReference>
<dbReference type="GO" id="GO:0034426">
    <property type="term" value="C:etioplast membrane"/>
    <property type="evidence" value="ECO:0007669"/>
    <property type="project" value="UniProtKB-SubCell"/>
</dbReference>
<dbReference type="GO" id="GO:0046930">
    <property type="term" value="C:pore complex"/>
    <property type="evidence" value="ECO:0007669"/>
    <property type="project" value="UniProtKB-KW"/>
</dbReference>
<dbReference type="GO" id="GO:0015171">
    <property type="term" value="F:amino acid transmembrane transporter activity"/>
    <property type="evidence" value="ECO:0007669"/>
    <property type="project" value="TreeGrafter"/>
</dbReference>
<dbReference type="GO" id="GO:0015288">
    <property type="term" value="F:porin activity"/>
    <property type="evidence" value="ECO:0007669"/>
    <property type="project" value="UniProtKB-KW"/>
</dbReference>
<dbReference type="GO" id="GO:0042803">
    <property type="term" value="F:protein homodimerization activity"/>
    <property type="evidence" value="ECO:0000314"/>
    <property type="project" value="UniProtKB"/>
</dbReference>
<dbReference type="GO" id="GO:0006811">
    <property type="term" value="P:monoatomic ion transport"/>
    <property type="evidence" value="ECO:0007669"/>
    <property type="project" value="UniProtKB-KW"/>
</dbReference>
<dbReference type="GO" id="GO:0045037">
    <property type="term" value="P:protein import into chloroplast stroma"/>
    <property type="evidence" value="ECO:0000314"/>
    <property type="project" value="UniProtKB"/>
</dbReference>
<dbReference type="InterPro" id="IPR045238">
    <property type="entry name" value="Tim23-like"/>
</dbReference>
<dbReference type="PANTHER" id="PTHR15371:SF2">
    <property type="entry name" value="OUTER ENVELOPE PORE PROTEIN 16-1, CHLOROPLASTIC"/>
    <property type="match status" value="1"/>
</dbReference>
<dbReference type="PANTHER" id="PTHR15371">
    <property type="entry name" value="TIM23"/>
    <property type="match status" value="1"/>
</dbReference>
<dbReference type="Pfam" id="PF02466">
    <property type="entry name" value="Tim17"/>
    <property type="match status" value="1"/>
</dbReference>
<reference key="1">
    <citation type="journal article" date="1997" name="Proc. Natl. Acad. Sci. U.S.A.">
        <title>Isolation and characterization of an amino acid-selective channel protein present in the chloroplastic outer envelope membrane.</title>
        <authorList>
            <person name="Pohlmeyer K."/>
            <person name="Soll J."/>
            <person name="Steinkamp T."/>
            <person name="Hinnah S."/>
            <person name="Wagner R."/>
        </authorList>
    </citation>
    <scope>NUCLEOTIDE SEQUENCE [MRNA]</scope>
    <scope>FUNCTION</scope>
    <scope>SUBUNIT</scope>
    <scope>BETA STRANDS</scope>
    <source>
        <strain>cv. Golf</strain>
        <tissue>Leaf</tissue>
    </source>
</reference>
<reference key="2">
    <citation type="journal article" date="2000" name="Biochemistry">
        <title>In vitro reconstitution and biophysical characterization of OEP16, an outer envelope pore protein of pea chloroplasts.</title>
        <authorList>
            <person name="Linke D."/>
            <person name="Frank J."/>
            <person name="Holzwarth J.F."/>
            <person name="Soll J."/>
            <person name="Boettcher C."/>
            <person name="Fromme P."/>
        </authorList>
    </citation>
    <scope>CHARACTERIZATION</scope>
</reference>
<reference key="3">
    <citation type="journal article" date="2000" name="J. Biol. Chem.">
        <title>Identification of the pore-forming region of the outer chloroplast envelope protein OEP16.</title>
        <authorList>
            <person name="Steinkamp T."/>
            <person name="Hill K."/>
            <person name="Hinnah S.C."/>
            <person name="Wagner R."/>
            <person name="Roehl T."/>
            <person name="Pohlmeyer K."/>
            <person name="Soll J."/>
        </authorList>
    </citation>
    <scope>FUNCTION</scope>
    <scope>TOPOLOGY</scope>
    <scope>MUTAGENESIS OF CYS-71</scope>
</reference>
<reference key="4">
    <citation type="journal article" date="2011" name="Protein Expr. Purif.">
        <title>Isolation, folding and structural investigations of the amino acid transporter OEP16.</title>
        <authorList>
            <person name="Ni D.Q."/>
            <person name="Zook J."/>
            <person name="Klewer D.A."/>
            <person name="Nieman R.A."/>
            <person name="Soll J."/>
            <person name="Fromme P."/>
        </authorList>
    </citation>
    <scope>FUNCTION</scope>
    <scope>TOPOLOGY</scope>
    <scope>SUBUNIT</scope>
</reference>
<organism>
    <name type="scientific">Pisum sativum</name>
    <name type="common">Garden pea</name>
    <name type="synonym">Lathyrus oleraceus</name>
    <dbReference type="NCBI Taxonomy" id="3888"/>
    <lineage>
        <taxon>Eukaryota</taxon>
        <taxon>Viridiplantae</taxon>
        <taxon>Streptophyta</taxon>
        <taxon>Embryophyta</taxon>
        <taxon>Tracheophyta</taxon>
        <taxon>Spermatophyta</taxon>
        <taxon>Magnoliopsida</taxon>
        <taxon>eudicotyledons</taxon>
        <taxon>Gunneridae</taxon>
        <taxon>Pentapetalae</taxon>
        <taxon>rosids</taxon>
        <taxon>fabids</taxon>
        <taxon>Fabales</taxon>
        <taxon>Fabaceae</taxon>
        <taxon>Papilionoideae</taxon>
        <taxon>50 kb inversion clade</taxon>
        <taxon>NPAAA clade</taxon>
        <taxon>Hologalegina</taxon>
        <taxon>IRL clade</taxon>
        <taxon>Fabeae</taxon>
        <taxon>Pisum</taxon>
    </lineage>
</organism>
<keyword id="KW-0150">Chloroplast</keyword>
<keyword id="KW-0406">Ion transport</keyword>
<keyword id="KW-0472">Membrane</keyword>
<keyword id="KW-0934">Plastid</keyword>
<keyword id="KW-1002">Plastid outer membrane</keyword>
<keyword id="KW-0626">Porin</keyword>
<keyword id="KW-0812">Transmembrane</keyword>
<keyword id="KW-1134">Transmembrane beta strand</keyword>
<keyword id="KW-1133">Transmembrane helix</keyword>
<keyword id="KW-0813">Transport</keyword>
<gene>
    <name type="primary">OEP16</name>
</gene>
<accession>Q41050</accession>
<name>OEP16_PEA</name>
<sequence>MPRSSFSGSLSSPKLDVVIDMGNPFLNLTVDGFLKIGAVAATRSVAEDTFHIIRKGSISSNDFEKSLKKMCKEGAYWGAIAGVYVGMEYGVERIRGTRDWKNAMFGGAVTGALVSAASNNKKDKIAVDAITGAAIATAAEFINYLT</sequence>
<evidence type="ECO:0000250" key="1"/>
<evidence type="ECO:0000255" key="2"/>
<evidence type="ECO:0000269" key="3">
    <source>
    </source>
</evidence>
<evidence type="ECO:0000269" key="4">
    <source>
    </source>
</evidence>
<evidence type="ECO:0000269" key="5">
    <source>
    </source>
</evidence>
<evidence type="ECO:0000305" key="6"/>
<comment type="function">
    <text evidence="3 4 5">Voltage-dependent high-conductance channel with a slight cation-selectivity; selective for amino acids but excludes triosephosphates or uncharged sugars. Non-essential amino acid-selective channel protein and translocation pore for NADPH:protochlorophyllide oxidoreductase A (PORA) and possibly PORB.</text>
</comment>
<comment type="subunit">
    <text evidence="4 5">Homodimer and oligomers in membrane.</text>
</comment>
<comment type="subcellular location">
    <subcellularLocation>
        <location evidence="1">Plastid</location>
        <location evidence="1">Chloroplast outer membrane</location>
        <topology evidence="1">Multi-pass membrane protein</topology>
    </subcellularLocation>
    <subcellularLocation>
        <location evidence="1">Plastid</location>
        <location evidence="1">Etioplast membrane</location>
        <topology evidence="1">Multi-pass membrane protein</topology>
    </subcellularLocation>
</comment>
<comment type="similarity">
    <text evidence="6">Belongs to the Tim17/Tim22/Tim23 family. Plastid outer envelope porin OEP16 (TC 1.B.30) subfamily.</text>
</comment>
<protein>
    <recommendedName>
        <fullName>Outer envelope pore protein 16, chloroplastic</fullName>
    </recommendedName>
    <alternativeName>
        <fullName>Chloroplastic outer envelope pore protein of 16 kDa</fullName>
    </alternativeName>
</protein>
<proteinExistence type="evidence at protein level"/>